<accession>O64740</accession>
<accession>Q8LAX1</accession>
<name>SC13B_ARATH</name>
<comment type="function">
    <text evidence="8">Required for protein transport from the endoplasmic reticulum to the Golgi apparatus.</text>
</comment>
<comment type="subunit">
    <text evidence="3 7">Part of the nuclear pore complex (NPC). The NPC has an eight-fold symmetrical structure comprising a central transport channel and two rings, the cytoplasmic and nuclear rings, to which eight filaments are attached. The cytoplasmic filaments have loose ends, while the nuclear filaments are joined in a distal ring, forming a nuclear basket. NPCs are highly dynamic in configuration and composition, and can be devided in 3 subcomplexes, the NUP62 subcomplex, the NUP107-160 subcomplex and the NUP93 subcomplex, containing approximately 30 different nucleoporin proteins. Interacts with MAG5, SEC31A and SEC31B.</text>
</comment>
<comment type="subcellular location">
    <subcellularLocation>
        <location evidence="8">Golgi apparatus</location>
    </subcellularLocation>
    <subcellularLocation>
        <location evidence="2 8">Endoplasmic reticulum</location>
    </subcellularLocation>
    <subcellularLocation>
        <location evidence="2">Nucleus envelope</location>
    </subcellularLocation>
    <subcellularLocation>
        <location evidence="7">Nucleus</location>
        <location evidence="7">Nuclear pore complex</location>
    </subcellularLocation>
</comment>
<comment type="similarity">
    <text evidence="6">Belongs to the WD repeat SEC13 family.</text>
</comment>
<protein>
    <recommendedName>
        <fullName evidence="6">Protein transport protein SEC13 homolog B</fullName>
    </recommendedName>
    <alternativeName>
        <fullName evidence="6">SEC13-like protein B</fullName>
    </alternativeName>
</protein>
<feature type="chain" id="PRO_0000430539" description="Protein transport protein SEC13 homolog B">
    <location>
        <begin position="1"/>
        <end position="302"/>
    </location>
</feature>
<feature type="repeat" description="WD 1" evidence="1">
    <location>
        <begin position="9"/>
        <end position="48"/>
    </location>
</feature>
<feature type="repeat" description="WD 2" evidence="1">
    <location>
        <begin position="54"/>
        <end position="95"/>
    </location>
</feature>
<feature type="repeat" description="WD 3" evidence="1">
    <location>
        <begin position="101"/>
        <end position="142"/>
    </location>
</feature>
<feature type="repeat" description="WD 4" evidence="1">
    <location>
        <begin position="148"/>
        <end position="201"/>
    </location>
</feature>
<feature type="repeat" description="WD 5" evidence="1">
    <location>
        <begin position="208"/>
        <end position="251"/>
    </location>
</feature>
<feature type="repeat" description="WD 6" evidence="1">
    <location>
        <begin position="257"/>
        <end position="296"/>
    </location>
</feature>
<feature type="sequence conflict" description="In Ref. 4; AAM65095." ref="4">
    <original>W</original>
    <variation>S</variation>
    <location>
        <position position="267"/>
    </location>
</feature>
<sequence length="302" mass="32642">MPGQKIETGHEDIVHDVQMDYYGKRIATASSDCTIKITGVSNNGGSQQLATLTGHRGPVWEVAWAHPKYGSILASCSYDGQVILWKEGNQNQWTQDHVFTDHKSSVNSIAWAPHDIGLSLACGSSDGNISVFTARADGGWDTSRIDQAHPVGVTSVSWAPATAPGALVSSGLLDPVYKLASGGCDNTVKVWKLANGSWKMDCFPALQKHTDWVRDVAWAPNLGLPKSTIASGSQDGKVIIWTVGKEGEQWEGKVLKDFMTPVWRVSWSLTGNLLAVSDGNNNVTVWKEAVDGEWEQVTAVEP</sequence>
<reference key="1">
    <citation type="journal article" date="1999" name="Nature">
        <title>Sequence and analysis of chromosome 2 of the plant Arabidopsis thaliana.</title>
        <authorList>
            <person name="Lin X."/>
            <person name="Kaul S."/>
            <person name="Rounsley S.D."/>
            <person name="Shea T.P."/>
            <person name="Benito M.-I."/>
            <person name="Town C.D."/>
            <person name="Fujii C.Y."/>
            <person name="Mason T.M."/>
            <person name="Bowman C.L."/>
            <person name="Barnstead M.E."/>
            <person name="Feldblyum T.V."/>
            <person name="Buell C.R."/>
            <person name="Ketchum K.A."/>
            <person name="Lee J.J."/>
            <person name="Ronning C.M."/>
            <person name="Koo H.L."/>
            <person name="Moffat K.S."/>
            <person name="Cronin L.A."/>
            <person name="Shen M."/>
            <person name="Pai G."/>
            <person name="Van Aken S."/>
            <person name="Umayam L."/>
            <person name="Tallon L.J."/>
            <person name="Gill J.E."/>
            <person name="Adams M.D."/>
            <person name="Carrera A.J."/>
            <person name="Creasy T.H."/>
            <person name="Goodman H.M."/>
            <person name="Somerville C.R."/>
            <person name="Copenhaver G.P."/>
            <person name="Preuss D."/>
            <person name="Nierman W.C."/>
            <person name="White O."/>
            <person name="Eisen J.A."/>
            <person name="Salzberg S.L."/>
            <person name="Fraser C.M."/>
            <person name="Venter J.C."/>
        </authorList>
    </citation>
    <scope>NUCLEOTIDE SEQUENCE [LARGE SCALE GENOMIC DNA]</scope>
    <source>
        <strain>cv. Columbia</strain>
    </source>
</reference>
<reference key="2">
    <citation type="journal article" date="2017" name="Plant J.">
        <title>Araport11: a complete reannotation of the Arabidopsis thaliana reference genome.</title>
        <authorList>
            <person name="Cheng C.Y."/>
            <person name="Krishnakumar V."/>
            <person name="Chan A.P."/>
            <person name="Thibaud-Nissen F."/>
            <person name="Schobel S."/>
            <person name="Town C.D."/>
        </authorList>
    </citation>
    <scope>GENOME REANNOTATION</scope>
    <source>
        <strain>cv. Columbia</strain>
    </source>
</reference>
<reference key="3">
    <citation type="journal article" date="2003" name="Science">
        <title>Empirical analysis of transcriptional activity in the Arabidopsis genome.</title>
        <authorList>
            <person name="Yamada K."/>
            <person name="Lim J."/>
            <person name="Dale J.M."/>
            <person name="Chen H."/>
            <person name="Shinn P."/>
            <person name="Palm C.J."/>
            <person name="Southwick A.M."/>
            <person name="Wu H.C."/>
            <person name="Kim C.J."/>
            <person name="Nguyen M."/>
            <person name="Pham P.K."/>
            <person name="Cheuk R.F."/>
            <person name="Karlin-Newmann G."/>
            <person name="Liu S.X."/>
            <person name="Lam B."/>
            <person name="Sakano H."/>
            <person name="Wu T."/>
            <person name="Yu G."/>
            <person name="Miranda M."/>
            <person name="Quach H.L."/>
            <person name="Tripp M."/>
            <person name="Chang C.H."/>
            <person name="Lee J.M."/>
            <person name="Toriumi M.J."/>
            <person name="Chan M.M."/>
            <person name="Tang C.C."/>
            <person name="Onodera C.S."/>
            <person name="Deng J.M."/>
            <person name="Akiyama K."/>
            <person name="Ansari Y."/>
            <person name="Arakawa T."/>
            <person name="Banh J."/>
            <person name="Banno F."/>
            <person name="Bowser L."/>
            <person name="Brooks S.Y."/>
            <person name="Carninci P."/>
            <person name="Chao Q."/>
            <person name="Choy N."/>
            <person name="Enju A."/>
            <person name="Goldsmith A.D."/>
            <person name="Gurjal M."/>
            <person name="Hansen N.F."/>
            <person name="Hayashizaki Y."/>
            <person name="Johnson-Hopson C."/>
            <person name="Hsuan V.W."/>
            <person name="Iida K."/>
            <person name="Karnes M."/>
            <person name="Khan S."/>
            <person name="Koesema E."/>
            <person name="Ishida J."/>
            <person name="Jiang P.X."/>
            <person name="Jones T."/>
            <person name="Kawai J."/>
            <person name="Kamiya A."/>
            <person name="Meyers C."/>
            <person name="Nakajima M."/>
            <person name="Narusaka M."/>
            <person name="Seki M."/>
            <person name="Sakurai T."/>
            <person name="Satou M."/>
            <person name="Tamse R."/>
            <person name="Vaysberg M."/>
            <person name="Wallender E.K."/>
            <person name="Wong C."/>
            <person name="Yamamura Y."/>
            <person name="Yuan S."/>
            <person name="Shinozaki K."/>
            <person name="Davis R.W."/>
            <person name="Theologis A."/>
            <person name="Ecker J.R."/>
        </authorList>
    </citation>
    <scope>NUCLEOTIDE SEQUENCE [LARGE SCALE MRNA]</scope>
    <source>
        <strain>cv. Columbia</strain>
    </source>
</reference>
<reference key="4">
    <citation type="submission" date="2002-03" db="EMBL/GenBank/DDBJ databases">
        <title>Full-length cDNA from Arabidopsis thaliana.</title>
        <authorList>
            <person name="Brover V.V."/>
            <person name="Troukhan M.E."/>
            <person name="Alexandrov N.A."/>
            <person name="Lu Y.-P."/>
            <person name="Flavell R.B."/>
            <person name="Feldmann K.A."/>
        </authorList>
    </citation>
    <scope>NUCLEOTIDE SEQUENCE [LARGE SCALE MRNA]</scope>
</reference>
<reference key="5">
    <citation type="journal article" date="2010" name="Plant Cell">
        <title>Identification and characterization of nuclear pore complex components in Arabidopsis thaliana.</title>
        <authorList>
            <person name="Tamura K."/>
            <person name="Fukao Y."/>
            <person name="Iwamoto M."/>
            <person name="Haraguchi T."/>
            <person name="Hara-Nishimura I."/>
        </authorList>
    </citation>
    <scope>IDENTIFICATION IN THE NUCLEAR PORE COMPLEX BY MASS SPECTROMETRY</scope>
    <scope>SUBCELLULAR LOCATION</scope>
    <scope>NOMENCLATURE</scope>
</reference>
<reference key="6">
    <citation type="journal article" date="2013" name="Plant Cell">
        <title>MAIGO5 functions in protein export from Golgi-associated endoplasmic reticulum exit sites in Arabidopsis.</title>
        <authorList>
            <person name="Takagi J."/>
            <person name="Renna L."/>
            <person name="Takahashi H."/>
            <person name="Koumoto Y."/>
            <person name="Tamura K."/>
            <person name="Stefano G."/>
            <person name="Fukao Y."/>
            <person name="Kondo M."/>
            <person name="Nishimura M."/>
            <person name="Shimada T."/>
            <person name="Brandizzi F."/>
            <person name="Hara-Nishimura I."/>
        </authorList>
    </citation>
    <scope>IDENTIFICATION BY MASS SPECTROMETRY</scope>
    <scope>INTERACTION WITH MAG5; SEC31A AND SEC31B</scope>
</reference>
<dbReference type="EMBL" id="AC004165">
    <property type="protein sequence ID" value="AAC16967.1"/>
    <property type="molecule type" value="Genomic_DNA"/>
</dbReference>
<dbReference type="EMBL" id="AC004680">
    <property type="protein sequence ID" value="AAM14986.1"/>
    <property type="molecule type" value="Genomic_DNA"/>
</dbReference>
<dbReference type="EMBL" id="CP002685">
    <property type="protein sequence ID" value="AEC08339.1"/>
    <property type="molecule type" value="Genomic_DNA"/>
</dbReference>
<dbReference type="EMBL" id="AF412112">
    <property type="protein sequence ID" value="AAL06565.1"/>
    <property type="molecule type" value="mRNA"/>
</dbReference>
<dbReference type="EMBL" id="AY124848">
    <property type="protein sequence ID" value="AAM70557.1"/>
    <property type="molecule type" value="mRNA"/>
</dbReference>
<dbReference type="EMBL" id="AY087553">
    <property type="protein sequence ID" value="AAM65095.1"/>
    <property type="molecule type" value="mRNA"/>
</dbReference>
<dbReference type="PIR" id="T00593">
    <property type="entry name" value="T02480"/>
</dbReference>
<dbReference type="RefSeq" id="NP_180566.1">
    <property type="nucleotide sequence ID" value="NM_128560.3"/>
</dbReference>
<dbReference type="SMR" id="O64740"/>
<dbReference type="BioGRID" id="2905">
    <property type="interactions" value="12"/>
</dbReference>
<dbReference type="FunCoup" id="O64740">
    <property type="interactions" value="4400"/>
</dbReference>
<dbReference type="IntAct" id="O64740">
    <property type="interactions" value="4"/>
</dbReference>
<dbReference type="STRING" id="3702.O64740"/>
<dbReference type="PaxDb" id="3702-AT2G30050.1"/>
<dbReference type="ProMEX" id="O64740"/>
<dbReference type="ProteomicsDB" id="232884"/>
<dbReference type="EnsemblPlants" id="AT2G30050.1">
    <property type="protein sequence ID" value="AT2G30050.1"/>
    <property type="gene ID" value="AT2G30050"/>
</dbReference>
<dbReference type="GeneID" id="817556"/>
<dbReference type="Gramene" id="AT2G30050.1">
    <property type="protein sequence ID" value="AT2G30050.1"/>
    <property type="gene ID" value="AT2G30050"/>
</dbReference>
<dbReference type="KEGG" id="ath:AT2G30050"/>
<dbReference type="Araport" id="AT2G30050"/>
<dbReference type="TAIR" id="AT2G30050"/>
<dbReference type="eggNOG" id="KOG1332">
    <property type="taxonomic scope" value="Eukaryota"/>
</dbReference>
<dbReference type="HOGENOM" id="CLU_032441_0_1_1"/>
<dbReference type="InParanoid" id="O64740"/>
<dbReference type="OMA" id="REGDQWE"/>
<dbReference type="OrthoDB" id="364224at2759"/>
<dbReference type="PhylomeDB" id="O64740"/>
<dbReference type="CD-CODE" id="4299E36E">
    <property type="entry name" value="Nucleolus"/>
</dbReference>
<dbReference type="PRO" id="PR:O64740"/>
<dbReference type="Proteomes" id="UP000006548">
    <property type="component" value="Chromosome 2"/>
</dbReference>
<dbReference type="ExpressionAtlas" id="O64740">
    <property type="expression patterns" value="baseline and differential"/>
</dbReference>
<dbReference type="GO" id="GO:0005783">
    <property type="term" value="C:endoplasmic reticulum"/>
    <property type="evidence" value="ECO:0007669"/>
    <property type="project" value="UniProtKB-SubCell"/>
</dbReference>
<dbReference type="GO" id="GO:0005794">
    <property type="term" value="C:Golgi apparatus"/>
    <property type="evidence" value="ECO:0007669"/>
    <property type="project" value="UniProtKB-SubCell"/>
</dbReference>
<dbReference type="GO" id="GO:0005635">
    <property type="term" value="C:nuclear envelope"/>
    <property type="evidence" value="ECO:0000314"/>
    <property type="project" value="TAIR"/>
</dbReference>
<dbReference type="GO" id="GO:0005643">
    <property type="term" value="C:nuclear pore"/>
    <property type="evidence" value="ECO:0000314"/>
    <property type="project" value="TAIR"/>
</dbReference>
<dbReference type="GO" id="GO:0005730">
    <property type="term" value="C:nucleolus"/>
    <property type="evidence" value="ECO:0007005"/>
    <property type="project" value="TAIR"/>
</dbReference>
<dbReference type="GO" id="GO:0005198">
    <property type="term" value="F:structural molecule activity"/>
    <property type="evidence" value="ECO:0007669"/>
    <property type="project" value="InterPro"/>
</dbReference>
<dbReference type="GO" id="GO:0051028">
    <property type="term" value="P:mRNA transport"/>
    <property type="evidence" value="ECO:0007669"/>
    <property type="project" value="UniProtKB-KW"/>
</dbReference>
<dbReference type="GO" id="GO:0015031">
    <property type="term" value="P:protein transport"/>
    <property type="evidence" value="ECO:0007669"/>
    <property type="project" value="UniProtKB-KW"/>
</dbReference>
<dbReference type="GO" id="GO:0016192">
    <property type="term" value="P:vesicle-mediated transport"/>
    <property type="evidence" value="ECO:0007669"/>
    <property type="project" value="UniProtKB-KW"/>
</dbReference>
<dbReference type="FunFam" id="2.130.10.10:FF:000017">
    <property type="entry name" value="SEC13 homolog (S. cerevisiae)"/>
    <property type="match status" value="1"/>
</dbReference>
<dbReference type="Gene3D" id="2.130.10.10">
    <property type="entry name" value="YVTN repeat-like/Quinoprotein amine dehydrogenase"/>
    <property type="match status" value="1"/>
</dbReference>
<dbReference type="InterPro" id="IPR020472">
    <property type="entry name" value="G-protein_beta_WD-40_rep"/>
</dbReference>
<dbReference type="InterPro" id="IPR037363">
    <property type="entry name" value="Sec13/Seh1_fam"/>
</dbReference>
<dbReference type="InterPro" id="IPR015943">
    <property type="entry name" value="WD40/YVTN_repeat-like_dom_sf"/>
</dbReference>
<dbReference type="InterPro" id="IPR036322">
    <property type="entry name" value="WD40_repeat_dom_sf"/>
</dbReference>
<dbReference type="InterPro" id="IPR001680">
    <property type="entry name" value="WD40_rpt"/>
</dbReference>
<dbReference type="PANTHER" id="PTHR11024">
    <property type="entry name" value="NUCLEAR PORE COMPLEX PROTEIN SEC13 / SEH1 FAMILY MEMBER"/>
    <property type="match status" value="1"/>
</dbReference>
<dbReference type="PANTHER" id="PTHR11024:SF20">
    <property type="entry name" value="PROTEIN TRANSPORT PROTEIN SEC13 HOMOLOG B"/>
    <property type="match status" value="1"/>
</dbReference>
<dbReference type="Pfam" id="PF00400">
    <property type="entry name" value="WD40"/>
    <property type="match status" value="6"/>
</dbReference>
<dbReference type="PRINTS" id="PR00320">
    <property type="entry name" value="GPROTEINBRPT"/>
</dbReference>
<dbReference type="SMART" id="SM00320">
    <property type="entry name" value="WD40"/>
    <property type="match status" value="6"/>
</dbReference>
<dbReference type="SUPFAM" id="SSF50978">
    <property type="entry name" value="WD40 repeat-like"/>
    <property type="match status" value="1"/>
</dbReference>
<dbReference type="PROSITE" id="PS50082">
    <property type="entry name" value="WD_REPEATS_2"/>
    <property type="match status" value="3"/>
</dbReference>
<dbReference type="PROSITE" id="PS50294">
    <property type="entry name" value="WD_REPEATS_REGION"/>
    <property type="match status" value="1"/>
</dbReference>
<organism>
    <name type="scientific">Arabidopsis thaliana</name>
    <name type="common">Mouse-ear cress</name>
    <dbReference type="NCBI Taxonomy" id="3702"/>
    <lineage>
        <taxon>Eukaryota</taxon>
        <taxon>Viridiplantae</taxon>
        <taxon>Streptophyta</taxon>
        <taxon>Embryophyta</taxon>
        <taxon>Tracheophyta</taxon>
        <taxon>Spermatophyta</taxon>
        <taxon>Magnoliopsida</taxon>
        <taxon>eudicotyledons</taxon>
        <taxon>Gunneridae</taxon>
        <taxon>Pentapetalae</taxon>
        <taxon>rosids</taxon>
        <taxon>malvids</taxon>
        <taxon>Brassicales</taxon>
        <taxon>Brassicaceae</taxon>
        <taxon>Camelineae</taxon>
        <taxon>Arabidopsis</taxon>
    </lineage>
</organism>
<keyword id="KW-0256">Endoplasmic reticulum</keyword>
<keyword id="KW-0931">ER-Golgi transport</keyword>
<keyword id="KW-0333">Golgi apparatus</keyword>
<keyword id="KW-0509">mRNA transport</keyword>
<keyword id="KW-0906">Nuclear pore complex</keyword>
<keyword id="KW-0539">Nucleus</keyword>
<keyword id="KW-0653">Protein transport</keyword>
<keyword id="KW-1185">Reference proteome</keyword>
<keyword id="KW-0677">Repeat</keyword>
<keyword id="KW-0811">Translocation</keyword>
<keyword id="KW-0813">Transport</keyword>
<keyword id="KW-0853">WD repeat</keyword>
<proteinExistence type="evidence at protein level"/>
<gene>
    <name evidence="5" type="primary">SEC13B</name>
    <name evidence="4" type="synonym">SEC13</name>
    <name evidence="9" type="ordered locus">At2g30050</name>
    <name evidence="6" type="ORF">T27E13.21</name>
</gene>
<evidence type="ECO:0000255" key="1"/>
<evidence type="ECO:0000269" key="2">
    <source>
    </source>
</evidence>
<evidence type="ECO:0000269" key="3">
    <source>
    </source>
</evidence>
<evidence type="ECO:0000303" key="4">
    <source>
    </source>
</evidence>
<evidence type="ECO:0000303" key="5">
    <source>
    </source>
</evidence>
<evidence type="ECO:0000305" key="6"/>
<evidence type="ECO:0000305" key="7">
    <source>
    </source>
</evidence>
<evidence type="ECO:0000305" key="8">
    <source>
    </source>
</evidence>
<evidence type="ECO:0000312" key="9">
    <source>
        <dbReference type="Araport" id="AT2G30050"/>
    </source>
</evidence>